<name>HIS1_STRM5</name>
<sequence length="303" mass="32801">MSATQAAPARDRLRIAIQKSGRLAEPARNLLSACGLSWRESRDKLFCYGESLPVDLLLVRDDDIPGLIADGVCDLGIVGRNELDEQAAARRQIGLPDAYQALRGLGFGQCRLMLAVPEEWQWQGPAQLAGTRIATSYPAILKQWLAEQGVDAQVVELSGSVEIAPRLGTADLICDLVSSGATLRANQLAPVHNLLDSEAVLAGAVRAPDDARGALRSMLLRRLDGVVQRQDRKLLMFRASEDRVDALAQLLVDAEPLVRLPADGGALRLQTMCPGPLSWQRMEELERAGAQGLMVLSVERSLA</sequence>
<keyword id="KW-0028">Amino-acid biosynthesis</keyword>
<keyword id="KW-0067">ATP-binding</keyword>
<keyword id="KW-0963">Cytoplasm</keyword>
<keyword id="KW-0328">Glycosyltransferase</keyword>
<keyword id="KW-0368">Histidine biosynthesis</keyword>
<keyword id="KW-0460">Magnesium</keyword>
<keyword id="KW-0479">Metal-binding</keyword>
<keyword id="KW-0547">Nucleotide-binding</keyword>
<keyword id="KW-0808">Transferase</keyword>
<reference key="1">
    <citation type="submission" date="2008-06" db="EMBL/GenBank/DDBJ databases">
        <title>Complete sequence of Stenotrophomonas maltophilia R551-3.</title>
        <authorList>
            <consortium name="US DOE Joint Genome Institute"/>
            <person name="Lucas S."/>
            <person name="Copeland A."/>
            <person name="Lapidus A."/>
            <person name="Glavina del Rio T."/>
            <person name="Dalin E."/>
            <person name="Tice H."/>
            <person name="Pitluck S."/>
            <person name="Chain P."/>
            <person name="Malfatti S."/>
            <person name="Shin M."/>
            <person name="Vergez L."/>
            <person name="Lang D."/>
            <person name="Schmutz J."/>
            <person name="Larimer F."/>
            <person name="Land M."/>
            <person name="Hauser L."/>
            <person name="Kyrpides N."/>
            <person name="Mikhailova N."/>
            <person name="Taghavi S."/>
            <person name="Monchy S."/>
            <person name="Newman L."/>
            <person name="Vangronsveld J."/>
            <person name="van der Lelie D."/>
            <person name="Richardson P."/>
        </authorList>
    </citation>
    <scope>NUCLEOTIDE SEQUENCE [LARGE SCALE GENOMIC DNA]</scope>
    <source>
        <strain>R551-3</strain>
    </source>
</reference>
<dbReference type="EC" id="2.4.2.17" evidence="1"/>
<dbReference type="EMBL" id="CP001111">
    <property type="protein sequence ID" value="ACF51460.1"/>
    <property type="molecule type" value="Genomic_DNA"/>
</dbReference>
<dbReference type="RefSeq" id="WP_012510883.1">
    <property type="nucleotide sequence ID" value="NC_011071.1"/>
</dbReference>
<dbReference type="SMR" id="B4STN6"/>
<dbReference type="STRING" id="391008.Smal_1756"/>
<dbReference type="KEGG" id="smt:Smal_1756"/>
<dbReference type="eggNOG" id="COG0040">
    <property type="taxonomic scope" value="Bacteria"/>
</dbReference>
<dbReference type="HOGENOM" id="CLU_038115_1_0_6"/>
<dbReference type="OrthoDB" id="9801867at2"/>
<dbReference type="UniPathway" id="UPA00031">
    <property type="reaction ID" value="UER00006"/>
</dbReference>
<dbReference type="Proteomes" id="UP000001867">
    <property type="component" value="Chromosome"/>
</dbReference>
<dbReference type="GO" id="GO:0005737">
    <property type="term" value="C:cytoplasm"/>
    <property type="evidence" value="ECO:0007669"/>
    <property type="project" value="UniProtKB-SubCell"/>
</dbReference>
<dbReference type="GO" id="GO:0005524">
    <property type="term" value="F:ATP binding"/>
    <property type="evidence" value="ECO:0007669"/>
    <property type="project" value="UniProtKB-KW"/>
</dbReference>
<dbReference type="GO" id="GO:0003879">
    <property type="term" value="F:ATP phosphoribosyltransferase activity"/>
    <property type="evidence" value="ECO:0007669"/>
    <property type="project" value="UniProtKB-UniRule"/>
</dbReference>
<dbReference type="GO" id="GO:0000287">
    <property type="term" value="F:magnesium ion binding"/>
    <property type="evidence" value="ECO:0007669"/>
    <property type="project" value="UniProtKB-UniRule"/>
</dbReference>
<dbReference type="GO" id="GO:0000105">
    <property type="term" value="P:L-histidine biosynthetic process"/>
    <property type="evidence" value="ECO:0007669"/>
    <property type="project" value="UniProtKB-UniRule"/>
</dbReference>
<dbReference type="FunFam" id="3.40.190.10:FF:000008">
    <property type="entry name" value="ATP phosphoribosyltransferase"/>
    <property type="match status" value="1"/>
</dbReference>
<dbReference type="Gene3D" id="3.30.70.120">
    <property type="match status" value="1"/>
</dbReference>
<dbReference type="Gene3D" id="3.40.190.10">
    <property type="entry name" value="Periplasmic binding protein-like II"/>
    <property type="match status" value="2"/>
</dbReference>
<dbReference type="HAMAP" id="MF_00079">
    <property type="entry name" value="HisG_Long"/>
    <property type="match status" value="1"/>
</dbReference>
<dbReference type="InterPro" id="IPR020621">
    <property type="entry name" value="ATP-PRT_HisG_long"/>
</dbReference>
<dbReference type="InterPro" id="IPR013820">
    <property type="entry name" value="ATP_PRibTrfase_cat"/>
</dbReference>
<dbReference type="InterPro" id="IPR018198">
    <property type="entry name" value="ATP_PRibTrfase_CS"/>
</dbReference>
<dbReference type="InterPro" id="IPR001348">
    <property type="entry name" value="ATP_PRibTrfase_HisG"/>
</dbReference>
<dbReference type="InterPro" id="IPR013115">
    <property type="entry name" value="HisG_C"/>
</dbReference>
<dbReference type="InterPro" id="IPR015867">
    <property type="entry name" value="N-reg_PII/ATP_PRibTrfase_C"/>
</dbReference>
<dbReference type="NCBIfam" id="TIGR00070">
    <property type="entry name" value="hisG"/>
    <property type="match status" value="1"/>
</dbReference>
<dbReference type="NCBIfam" id="TIGR03455">
    <property type="entry name" value="HisG_C-term"/>
    <property type="match status" value="1"/>
</dbReference>
<dbReference type="PANTHER" id="PTHR21403:SF8">
    <property type="entry name" value="ATP PHOSPHORIBOSYLTRANSFERASE"/>
    <property type="match status" value="1"/>
</dbReference>
<dbReference type="PANTHER" id="PTHR21403">
    <property type="entry name" value="ATP PHOSPHORIBOSYLTRANSFERASE ATP-PRTASE"/>
    <property type="match status" value="1"/>
</dbReference>
<dbReference type="Pfam" id="PF01634">
    <property type="entry name" value="HisG"/>
    <property type="match status" value="1"/>
</dbReference>
<dbReference type="SUPFAM" id="SSF53850">
    <property type="entry name" value="Periplasmic binding protein-like II"/>
    <property type="match status" value="1"/>
</dbReference>
<dbReference type="PROSITE" id="PS01316">
    <property type="entry name" value="ATP_P_PHORIBOSYLTR"/>
    <property type="match status" value="1"/>
</dbReference>
<proteinExistence type="inferred from homology"/>
<organism>
    <name type="scientific">Stenotrophomonas maltophilia (strain R551-3)</name>
    <dbReference type="NCBI Taxonomy" id="391008"/>
    <lineage>
        <taxon>Bacteria</taxon>
        <taxon>Pseudomonadati</taxon>
        <taxon>Pseudomonadota</taxon>
        <taxon>Gammaproteobacteria</taxon>
        <taxon>Lysobacterales</taxon>
        <taxon>Lysobacteraceae</taxon>
        <taxon>Stenotrophomonas</taxon>
        <taxon>Stenotrophomonas maltophilia group</taxon>
    </lineage>
</organism>
<accession>B4STN6</accession>
<feature type="chain" id="PRO_1000092754" description="ATP phosphoribosyltransferase">
    <location>
        <begin position="1"/>
        <end position="303"/>
    </location>
</feature>
<comment type="function">
    <text evidence="1">Catalyzes the condensation of ATP and 5-phosphoribose 1-diphosphate to form N'-(5'-phosphoribosyl)-ATP (PR-ATP). Has a crucial role in the pathway because the rate of histidine biosynthesis seems to be controlled primarily by regulation of HisG enzymatic activity.</text>
</comment>
<comment type="catalytic activity">
    <reaction evidence="1">
        <text>1-(5-phospho-beta-D-ribosyl)-ATP + diphosphate = 5-phospho-alpha-D-ribose 1-diphosphate + ATP</text>
        <dbReference type="Rhea" id="RHEA:18473"/>
        <dbReference type="ChEBI" id="CHEBI:30616"/>
        <dbReference type="ChEBI" id="CHEBI:33019"/>
        <dbReference type="ChEBI" id="CHEBI:58017"/>
        <dbReference type="ChEBI" id="CHEBI:73183"/>
        <dbReference type="EC" id="2.4.2.17"/>
    </reaction>
</comment>
<comment type="cofactor">
    <cofactor evidence="1">
        <name>Mg(2+)</name>
        <dbReference type="ChEBI" id="CHEBI:18420"/>
    </cofactor>
</comment>
<comment type="activity regulation">
    <text evidence="1">Feedback inhibited by histidine.</text>
</comment>
<comment type="pathway">
    <text evidence="1">Amino-acid biosynthesis; L-histidine biosynthesis; L-histidine from 5-phospho-alpha-D-ribose 1-diphosphate: step 1/9.</text>
</comment>
<comment type="subcellular location">
    <subcellularLocation>
        <location evidence="1">Cytoplasm</location>
    </subcellularLocation>
</comment>
<comment type="similarity">
    <text evidence="1">Belongs to the ATP phosphoribosyltransferase family. Long subfamily.</text>
</comment>
<protein>
    <recommendedName>
        <fullName evidence="1">ATP phosphoribosyltransferase</fullName>
        <shortName evidence="1">ATP-PRT</shortName>
        <shortName evidence="1">ATP-PRTase</shortName>
        <ecNumber evidence="1">2.4.2.17</ecNumber>
    </recommendedName>
</protein>
<gene>
    <name evidence="1" type="primary">hisG</name>
    <name type="ordered locus">Smal_1756</name>
</gene>
<evidence type="ECO:0000255" key="1">
    <source>
        <dbReference type="HAMAP-Rule" id="MF_00079"/>
    </source>
</evidence>